<reference key="1">
    <citation type="submission" date="2006-08" db="EMBL/GenBank/DDBJ databases">
        <title>Complete sequence of Shewanella frigidimarina NCIMB 400.</title>
        <authorList>
            <consortium name="US DOE Joint Genome Institute"/>
            <person name="Copeland A."/>
            <person name="Lucas S."/>
            <person name="Lapidus A."/>
            <person name="Barry K."/>
            <person name="Detter J.C."/>
            <person name="Glavina del Rio T."/>
            <person name="Hammon N."/>
            <person name="Israni S."/>
            <person name="Dalin E."/>
            <person name="Tice H."/>
            <person name="Pitluck S."/>
            <person name="Fredrickson J.K."/>
            <person name="Kolker E."/>
            <person name="McCuel L.A."/>
            <person name="DiChristina T."/>
            <person name="Nealson K.H."/>
            <person name="Newman D."/>
            <person name="Tiedje J.M."/>
            <person name="Zhou J."/>
            <person name="Romine M.F."/>
            <person name="Culley D.E."/>
            <person name="Serres M."/>
            <person name="Chertkov O."/>
            <person name="Brettin T."/>
            <person name="Bruce D."/>
            <person name="Han C."/>
            <person name="Tapia R."/>
            <person name="Gilna P."/>
            <person name="Schmutz J."/>
            <person name="Larimer F."/>
            <person name="Land M."/>
            <person name="Hauser L."/>
            <person name="Kyrpides N."/>
            <person name="Mikhailova N."/>
            <person name="Richardson P."/>
        </authorList>
    </citation>
    <scope>NUCLEOTIDE SEQUENCE [LARGE SCALE GENOMIC DNA]</scope>
    <source>
        <strain>NCIMB 400</strain>
    </source>
</reference>
<accession>Q07WG2</accession>
<protein>
    <recommendedName>
        <fullName evidence="1">Large ribosomal subunit protein bL28</fullName>
    </recommendedName>
    <alternativeName>
        <fullName evidence="3">50S ribosomal protein L28</fullName>
    </alternativeName>
</protein>
<name>RL28_SHEFN</name>
<feature type="chain" id="PRO_1000007348" description="Large ribosomal subunit protein bL28">
    <location>
        <begin position="1"/>
        <end position="78"/>
    </location>
</feature>
<feature type="region of interest" description="Disordered" evidence="2">
    <location>
        <begin position="1"/>
        <end position="23"/>
    </location>
</feature>
<keyword id="KW-1185">Reference proteome</keyword>
<keyword id="KW-0687">Ribonucleoprotein</keyword>
<keyword id="KW-0689">Ribosomal protein</keyword>
<sequence>MSRVCQVTGKKPMVGNNRSHAKNSTRRRFLPNLQNHRFWLEEEKRFVQLRVSTKGIRIIDKKGIEVIVKELRARGEKV</sequence>
<evidence type="ECO:0000255" key="1">
    <source>
        <dbReference type="HAMAP-Rule" id="MF_00373"/>
    </source>
</evidence>
<evidence type="ECO:0000256" key="2">
    <source>
        <dbReference type="SAM" id="MobiDB-lite"/>
    </source>
</evidence>
<evidence type="ECO:0000305" key="3"/>
<gene>
    <name evidence="1" type="primary">rpmB</name>
    <name type="ordered locus">Sfri_3827</name>
</gene>
<dbReference type="EMBL" id="CP000447">
    <property type="protein sequence ID" value="ABI73652.1"/>
    <property type="molecule type" value="Genomic_DNA"/>
</dbReference>
<dbReference type="RefSeq" id="WP_011639236.1">
    <property type="nucleotide sequence ID" value="NC_008345.1"/>
</dbReference>
<dbReference type="SMR" id="Q07WG2"/>
<dbReference type="STRING" id="318167.Sfri_3827"/>
<dbReference type="GeneID" id="90571042"/>
<dbReference type="KEGG" id="sfr:Sfri_3827"/>
<dbReference type="eggNOG" id="COG0227">
    <property type="taxonomic scope" value="Bacteria"/>
</dbReference>
<dbReference type="HOGENOM" id="CLU_064548_3_1_6"/>
<dbReference type="OrthoDB" id="9805609at2"/>
<dbReference type="Proteomes" id="UP000000684">
    <property type="component" value="Chromosome"/>
</dbReference>
<dbReference type="GO" id="GO:0022625">
    <property type="term" value="C:cytosolic large ribosomal subunit"/>
    <property type="evidence" value="ECO:0007669"/>
    <property type="project" value="TreeGrafter"/>
</dbReference>
<dbReference type="GO" id="GO:0003735">
    <property type="term" value="F:structural constituent of ribosome"/>
    <property type="evidence" value="ECO:0007669"/>
    <property type="project" value="InterPro"/>
</dbReference>
<dbReference type="GO" id="GO:0006412">
    <property type="term" value="P:translation"/>
    <property type="evidence" value="ECO:0007669"/>
    <property type="project" value="UniProtKB-UniRule"/>
</dbReference>
<dbReference type="FunFam" id="2.30.170.40:FF:000001">
    <property type="entry name" value="50S ribosomal protein L28"/>
    <property type="match status" value="1"/>
</dbReference>
<dbReference type="Gene3D" id="2.30.170.40">
    <property type="entry name" value="Ribosomal protein L28/L24"/>
    <property type="match status" value="1"/>
</dbReference>
<dbReference type="HAMAP" id="MF_00373">
    <property type="entry name" value="Ribosomal_bL28"/>
    <property type="match status" value="1"/>
</dbReference>
<dbReference type="InterPro" id="IPR026569">
    <property type="entry name" value="Ribosomal_bL28"/>
</dbReference>
<dbReference type="InterPro" id="IPR034704">
    <property type="entry name" value="Ribosomal_bL28/bL31-like_sf"/>
</dbReference>
<dbReference type="InterPro" id="IPR001383">
    <property type="entry name" value="Ribosomal_bL28_bact-type"/>
</dbReference>
<dbReference type="InterPro" id="IPR037147">
    <property type="entry name" value="Ribosomal_bL28_sf"/>
</dbReference>
<dbReference type="NCBIfam" id="TIGR00009">
    <property type="entry name" value="L28"/>
    <property type="match status" value="1"/>
</dbReference>
<dbReference type="PANTHER" id="PTHR13528">
    <property type="entry name" value="39S RIBOSOMAL PROTEIN L28, MITOCHONDRIAL"/>
    <property type="match status" value="1"/>
</dbReference>
<dbReference type="PANTHER" id="PTHR13528:SF2">
    <property type="entry name" value="LARGE RIBOSOMAL SUBUNIT PROTEIN BL28M"/>
    <property type="match status" value="1"/>
</dbReference>
<dbReference type="Pfam" id="PF00830">
    <property type="entry name" value="Ribosomal_L28"/>
    <property type="match status" value="1"/>
</dbReference>
<dbReference type="SUPFAM" id="SSF143800">
    <property type="entry name" value="L28p-like"/>
    <property type="match status" value="1"/>
</dbReference>
<comment type="similarity">
    <text evidence="1">Belongs to the bacterial ribosomal protein bL28 family.</text>
</comment>
<proteinExistence type="inferred from homology"/>
<organism>
    <name type="scientific">Shewanella frigidimarina (strain NCIMB 400)</name>
    <dbReference type="NCBI Taxonomy" id="318167"/>
    <lineage>
        <taxon>Bacteria</taxon>
        <taxon>Pseudomonadati</taxon>
        <taxon>Pseudomonadota</taxon>
        <taxon>Gammaproteobacteria</taxon>
        <taxon>Alteromonadales</taxon>
        <taxon>Shewanellaceae</taxon>
        <taxon>Shewanella</taxon>
    </lineage>
</organism>